<sequence>MKVISNFQNKKILILGLAKSGEAAAKLLTKLGALVTVNDSKPFDQNPAAQALLEEGIKVICGSHPVELLDENFEYMVKNPGIPYDNPMVKRALAKEIPILTEVELAYFVSEAPIIGITGSNGKTTTTTMIADVLNAGGQSALLSGNIGYPASKVVQKAIAGDTLVMELSSFQLVGVNAFRPHIAVITNLMPTHLDYHGSFEDYVAAKWMIQAQMTESDYLILNANQEISATLAKTTKATVIPFSTQKVVDGAYLNDGILYFKEQAIIAATDLGVPGSHNIENALATIAVAKLSGIADDIIAQCLSHFGGVKHRLQRVGQIKDITFYNDSKSTNILATQKALSGFDNSRLILIAGGLDRGNEFDDLVPDLLGLKQMIILGESAERMKRAANKAEVSYLEARSVAEATELAFKLAQTGDTILLSPANASWDMYPNFEVRGDEFLATFDCLRGDA</sequence>
<dbReference type="EC" id="6.3.2.9" evidence="1"/>
<dbReference type="EMBL" id="CP000262">
    <property type="protein sequence ID" value="ABF38311.1"/>
    <property type="molecule type" value="Genomic_DNA"/>
</dbReference>
<dbReference type="SMR" id="Q1J5S5"/>
<dbReference type="KEGG" id="spi:MGAS10750_Spy1361"/>
<dbReference type="HOGENOM" id="CLU_032540_0_1_9"/>
<dbReference type="UniPathway" id="UPA00219"/>
<dbReference type="Proteomes" id="UP000002434">
    <property type="component" value="Chromosome"/>
</dbReference>
<dbReference type="GO" id="GO:0005737">
    <property type="term" value="C:cytoplasm"/>
    <property type="evidence" value="ECO:0007669"/>
    <property type="project" value="UniProtKB-SubCell"/>
</dbReference>
<dbReference type="GO" id="GO:0005524">
    <property type="term" value="F:ATP binding"/>
    <property type="evidence" value="ECO:0007669"/>
    <property type="project" value="UniProtKB-UniRule"/>
</dbReference>
<dbReference type="GO" id="GO:0008764">
    <property type="term" value="F:UDP-N-acetylmuramoylalanine-D-glutamate ligase activity"/>
    <property type="evidence" value="ECO:0007669"/>
    <property type="project" value="UniProtKB-UniRule"/>
</dbReference>
<dbReference type="GO" id="GO:0051301">
    <property type="term" value="P:cell division"/>
    <property type="evidence" value="ECO:0007669"/>
    <property type="project" value="UniProtKB-KW"/>
</dbReference>
<dbReference type="GO" id="GO:0071555">
    <property type="term" value="P:cell wall organization"/>
    <property type="evidence" value="ECO:0007669"/>
    <property type="project" value="UniProtKB-KW"/>
</dbReference>
<dbReference type="GO" id="GO:0009252">
    <property type="term" value="P:peptidoglycan biosynthetic process"/>
    <property type="evidence" value="ECO:0007669"/>
    <property type="project" value="UniProtKB-UniRule"/>
</dbReference>
<dbReference type="GO" id="GO:0008360">
    <property type="term" value="P:regulation of cell shape"/>
    <property type="evidence" value="ECO:0007669"/>
    <property type="project" value="UniProtKB-KW"/>
</dbReference>
<dbReference type="Gene3D" id="3.90.190.20">
    <property type="entry name" value="Mur ligase, C-terminal domain"/>
    <property type="match status" value="1"/>
</dbReference>
<dbReference type="Gene3D" id="3.40.1190.10">
    <property type="entry name" value="Mur-like, catalytic domain"/>
    <property type="match status" value="1"/>
</dbReference>
<dbReference type="Gene3D" id="3.40.50.720">
    <property type="entry name" value="NAD(P)-binding Rossmann-like Domain"/>
    <property type="match status" value="1"/>
</dbReference>
<dbReference type="HAMAP" id="MF_00639">
    <property type="entry name" value="MurD"/>
    <property type="match status" value="1"/>
</dbReference>
<dbReference type="InterPro" id="IPR036565">
    <property type="entry name" value="Mur-like_cat_sf"/>
</dbReference>
<dbReference type="InterPro" id="IPR004101">
    <property type="entry name" value="Mur_ligase_C"/>
</dbReference>
<dbReference type="InterPro" id="IPR036615">
    <property type="entry name" value="Mur_ligase_C_dom_sf"/>
</dbReference>
<dbReference type="InterPro" id="IPR013221">
    <property type="entry name" value="Mur_ligase_cen"/>
</dbReference>
<dbReference type="InterPro" id="IPR005762">
    <property type="entry name" value="MurD"/>
</dbReference>
<dbReference type="NCBIfam" id="TIGR01087">
    <property type="entry name" value="murD"/>
    <property type="match status" value="1"/>
</dbReference>
<dbReference type="PANTHER" id="PTHR43692">
    <property type="entry name" value="UDP-N-ACETYLMURAMOYLALANINE--D-GLUTAMATE LIGASE"/>
    <property type="match status" value="1"/>
</dbReference>
<dbReference type="PANTHER" id="PTHR43692:SF1">
    <property type="entry name" value="UDP-N-ACETYLMURAMOYLALANINE--D-GLUTAMATE LIGASE"/>
    <property type="match status" value="1"/>
</dbReference>
<dbReference type="Pfam" id="PF02875">
    <property type="entry name" value="Mur_ligase_C"/>
    <property type="match status" value="1"/>
</dbReference>
<dbReference type="Pfam" id="PF08245">
    <property type="entry name" value="Mur_ligase_M"/>
    <property type="match status" value="1"/>
</dbReference>
<dbReference type="Pfam" id="PF21799">
    <property type="entry name" value="MurD-like_N"/>
    <property type="match status" value="1"/>
</dbReference>
<dbReference type="SUPFAM" id="SSF51984">
    <property type="entry name" value="MurCD N-terminal domain"/>
    <property type="match status" value="1"/>
</dbReference>
<dbReference type="SUPFAM" id="SSF53623">
    <property type="entry name" value="MurD-like peptide ligases, catalytic domain"/>
    <property type="match status" value="1"/>
</dbReference>
<dbReference type="SUPFAM" id="SSF53244">
    <property type="entry name" value="MurD-like peptide ligases, peptide-binding domain"/>
    <property type="match status" value="1"/>
</dbReference>
<organism>
    <name type="scientific">Streptococcus pyogenes serotype M4 (strain MGAS10750)</name>
    <dbReference type="NCBI Taxonomy" id="370554"/>
    <lineage>
        <taxon>Bacteria</taxon>
        <taxon>Bacillati</taxon>
        <taxon>Bacillota</taxon>
        <taxon>Bacilli</taxon>
        <taxon>Lactobacillales</taxon>
        <taxon>Streptococcaceae</taxon>
        <taxon>Streptococcus</taxon>
    </lineage>
</organism>
<feature type="chain" id="PRO_0000257251" description="UDP-N-acetylmuramoylalanine--D-glutamate ligase">
    <location>
        <begin position="1"/>
        <end position="452"/>
    </location>
</feature>
<feature type="binding site" evidence="1">
    <location>
        <begin position="119"/>
        <end position="125"/>
    </location>
    <ligand>
        <name>ATP</name>
        <dbReference type="ChEBI" id="CHEBI:30616"/>
    </ligand>
</feature>
<reference key="1">
    <citation type="journal article" date="2006" name="Proc. Natl. Acad. Sci. U.S.A.">
        <title>Molecular genetic anatomy of inter- and intraserotype variation in the human bacterial pathogen group A Streptococcus.</title>
        <authorList>
            <person name="Beres S.B."/>
            <person name="Richter E.W."/>
            <person name="Nagiec M.J."/>
            <person name="Sumby P."/>
            <person name="Porcella S.F."/>
            <person name="DeLeo F.R."/>
            <person name="Musser J.M."/>
        </authorList>
    </citation>
    <scope>NUCLEOTIDE SEQUENCE [LARGE SCALE GENOMIC DNA]</scope>
    <source>
        <strain>MGAS10750</strain>
    </source>
</reference>
<name>MURD_STRPF</name>
<comment type="function">
    <text evidence="1">Cell wall formation. Catalyzes the addition of glutamate to the nucleotide precursor UDP-N-acetylmuramoyl-L-alanine (UMA).</text>
</comment>
<comment type="catalytic activity">
    <reaction evidence="1">
        <text>UDP-N-acetyl-alpha-D-muramoyl-L-alanine + D-glutamate + ATP = UDP-N-acetyl-alpha-D-muramoyl-L-alanyl-D-glutamate + ADP + phosphate + H(+)</text>
        <dbReference type="Rhea" id="RHEA:16429"/>
        <dbReference type="ChEBI" id="CHEBI:15378"/>
        <dbReference type="ChEBI" id="CHEBI:29986"/>
        <dbReference type="ChEBI" id="CHEBI:30616"/>
        <dbReference type="ChEBI" id="CHEBI:43474"/>
        <dbReference type="ChEBI" id="CHEBI:83898"/>
        <dbReference type="ChEBI" id="CHEBI:83900"/>
        <dbReference type="ChEBI" id="CHEBI:456216"/>
        <dbReference type="EC" id="6.3.2.9"/>
    </reaction>
</comment>
<comment type="pathway">
    <text evidence="1">Cell wall biogenesis; peptidoglycan biosynthesis.</text>
</comment>
<comment type="subcellular location">
    <subcellularLocation>
        <location evidence="1">Cytoplasm</location>
    </subcellularLocation>
</comment>
<comment type="similarity">
    <text evidence="1">Belongs to the MurCDEF family.</text>
</comment>
<protein>
    <recommendedName>
        <fullName evidence="1">UDP-N-acetylmuramoylalanine--D-glutamate ligase</fullName>
        <ecNumber evidence="1">6.3.2.9</ecNumber>
    </recommendedName>
    <alternativeName>
        <fullName evidence="1">D-glutamic acid-adding enzyme</fullName>
    </alternativeName>
    <alternativeName>
        <fullName evidence="1">UDP-N-acetylmuramoyl-L-alanyl-D-glutamate synthetase</fullName>
    </alternativeName>
</protein>
<keyword id="KW-0067">ATP-binding</keyword>
<keyword id="KW-0131">Cell cycle</keyword>
<keyword id="KW-0132">Cell division</keyword>
<keyword id="KW-0133">Cell shape</keyword>
<keyword id="KW-0961">Cell wall biogenesis/degradation</keyword>
<keyword id="KW-0963">Cytoplasm</keyword>
<keyword id="KW-0436">Ligase</keyword>
<keyword id="KW-0547">Nucleotide-binding</keyword>
<keyword id="KW-0573">Peptidoglycan synthesis</keyword>
<evidence type="ECO:0000255" key="1">
    <source>
        <dbReference type="HAMAP-Rule" id="MF_00639"/>
    </source>
</evidence>
<accession>Q1J5S5</accession>
<gene>
    <name evidence="1" type="primary">murD</name>
    <name type="ordered locus">MGAS10750_Spy1361</name>
</gene>
<proteinExistence type="inferred from homology"/>